<evidence type="ECO:0000305" key="1"/>
<proteinExistence type="inferred from homology"/>
<gene>
    <name type="primary">lpcC</name>
</gene>
<comment type="function">
    <text>Acts at transfer of mannose group to a 3-deoxy-D-mono octulonic acid (KDO) via an alpha-1,5 linkage.</text>
</comment>
<comment type="pathway">
    <text>Bacterial outer membrane biogenesis; LPS core biosynthesis.</text>
</comment>
<comment type="similarity">
    <text evidence="1">Belongs to the glycosyltransferase group 1 family. Glycosyltransferase 4 subfamily.</text>
</comment>
<sequence length="352" mass="38641">MPDIRDVEIIAPNFKRRLSGVTSTIVQLIPCQIRLGIKIATLGPGLPEDLPKLKWRQLLGLWRPPARRRRRVWHARRNNEMAVGILLRHLTRMPLKLLFTSAAQRRHTAYTKWLIRRMDAVIATSDRSGSFLEVPHTVIQHGVDLALFHPPEAAEDGIAATGLPGRHLVGCFGRVRHQKGTDLFVRAMIELLPQHTEWTAVVSGRVTAEHVAFADKLKADVVAAGLSDRILFLGEVPDIKIWYRRLTLYVAPSRNEGFGLTPLEAMASRTAVVASDAGAYAELIVTGETGSVVAASDGEALTRAIAPYIADPALAVAHGENALRHVRANFALEREASAIGAVYNSLLGDNRS</sequence>
<feature type="chain" id="PRO_0000080296" description="Lipopolysaccharide core biosynthesis mannosyltransferase LpcC">
    <location>
        <begin position="1"/>
        <end position="352"/>
    </location>
</feature>
<keyword id="KW-0328">Glycosyltransferase</keyword>
<keyword id="KW-0448">Lipopolysaccharide biosynthesis</keyword>
<keyword id="KW-0808">Transferase</keyword>
<name>LPCC_RHILV</name>
<organism>
    <name type="scientific">Rhizobium leguminosarum bv. viciae</name>
    <dbReference type="NCBI Taxonomy" id="387"/>
    <lineage>
        <taxon>Bacteria</taxon>
        <taxon>Pseudomonadati</taxon>
        <taxon>Pseudomonadota</taxon>
        <taxon>Alphaproteobacteria</taxon>
        <taxon>Hyphomicrobiales</taxon>
        <taxon>Rhizobiaceae</taxon>
        <taxon>Rhizobium/Agrobacterium group</taxon>
        <taxon>Rhizobium</taxon>
    </lineage>
</organism>
<reference key="1">
    <citation type="journal article" date="1998" name="J. Biol. Chem.">
        <title>Cloning and overexpression of glycosyltransferases that generate the lipopolysaccharide core of Rhizobium leguminosarum.</title>
        <authorList>
            <person name="Kadrmas J.L."/>
            <person name="Allaway D."/>
            <person name="Studholme R.E."/>
            <person name="Sullivan J.T."/>
            <person name="Ronson C.W."/>
            <person name="Poole P.S."/>
            <person name="Raetz C.R.H."/>
        </authorList>
    </citation>
    <scope>NUCLEOTIDE SEQUENCE [GENOMIC DNA]</scope>
    <source>
        <strain>3855</strain>
    </source>
</reference>
<accession>O68547</accession>
<protein>
    <recommendedName>
        <fullName>Lipopolysaccharide core biosynthesis mannosyltransferase LpcC</fullName>
        <ecNumber>2.4.-.-</ecNumber>
    </recommendedName>
</protein>
<dbReference type="EC" id="2.4.-.-"/>
<dbReference type="EMBL" id="AF050103">
    <property type="protein sequence ID" value="AAC05215.1"/>
    <property type="molecule type" value="Genomic_DNA"/>
</dbReference>
<dbReference type="RefSeq" id="WP_018242997.1">
    <property type="nucleotide sequence ID" value="NZ_WIEG01000010.1"/>
</dbReference>
<dbReference type="SMR" id="O68547"/>
<dbReference type="CAZy" id="GT4">
    <property type="family name" value="Glycosyltransferase Family 4"/>
</dbReference>
<dbReference type="UniPathway" id="UPA00958"/>
<dbReference type="GO" id="GO:0016757">
    <property type="term" value="F:glycosyltransferase activity"/>
    <property type="evidence" value="ECO:0007669"/>
    <property type="project" value="UniProtKB-KW"/>
</dbReference>
<dbReference type="GO" id="GO:0009244">
    <property type="term" value="P:lipopolysaccharide core region biosynthetic process"/>
    <property type="evidence" value="ECO:0007669"/>
    <property type="project" value="UniProtKB-UniPathway"/>
</dbReference>
<dbReference type="CDD" id="cd03801">
    <property type="entry name" value="GT4_PimA-like"/>
    <property type="match status" value="1"/>
</dbReference>
<dbReference type="Gene3D" id="3.40.50.2000">
    <property type="entry name" value="Glycogen Phosphorylase B"/>
    <property type="match status" value="1"/>
</dbReference>
<dbReference type="InterPro" id="IPR001296">
    <property type="entry name" value="Glyco_trans_1"/>
</dbReference>
<dbReference type="PANTHER" id="PTHR12526:SF640">
    <property type="entry name" value="COLANIC ACID BIOSYNTHESIS GLYCOSYLTRANSFERASE WCAL-RELATED"/>
    <property type="match status" value="1"/>
</dbReference>
<dbReference type="PANTHER" id="PTHR12526">
    <property type="entry name" value="GLYCOSYLTRANSFERASE"/>
    <property type="match status" value="1"/>
</dbReference>
<dbReference type="Pfam" id="PF00534">
    <property type="entry name" value="Glycos_transf_1"/>
    <property type="match status" value="1"/>
</dbReference>
<dbReference type="SUPFAM" id="SSF53756">
    <property type="entry name" value="UDP-Glycosyltransferase/glycogen phosphorylase"/>
    <property type="match status" value="1"/>
</dbReference>